<sequence length="251" mass="29855">MVDIQDFSTNLIENNQAIMIVGPKYTGKTTLIERLVNDLCARKEIKRIYWYKPMNSRSINYSEKNKFSSLVKLYNNYQNIFDEYSKKSIQKKLNKESNKESIIVLDDIRPHNIPTINIIKKLILDRKKNNVTIIFSLQNFGPYNGVVLPFDLYFSFDNFNYMSKKMFSCEFKKKFKTTYEYEFKMFTNKYSKTKYNSLVFDGHTLNLYQFNAVSAITEYPNKDTYFDLLDEFDIEIIEDTIKIPNKLVIEI</sequence>
<proteinExistence type="predicted"/>
<gene>
    <name type="ordered locus">MIMI_L666</name>
</gene>
<accession>Q5UNS7</accession>
<organism>
    <name type="scientific">Acanthamoeba polyphaga mimivirus</name>
    <name type="common">APMV</name>
    <dbReference type="NCBI Taxonomy" id="212035"/>
    <lineage>
        <taxon>Viruses</taxon>
        <taxon>Varidnaviria</taxon>
        <taxon>Bamfordvirae</taxon>
        <taxon>Nucleocytoviricota</taxon>
        <taxon>Megaviricetes</taxon>
        <taxon>Imitervirales</taxon>
        <taxon>Mimiviridae</taxon>
        <taxon>Megamimivirinae</taxon>
        <taxon>Mimivirus</taxon>
        <taxon>Mimivirus bradfordmassiliense</taxon>
    </lineage>
</organism>
<reference key="1">
    <citation type="journal article" date="2004" name="Science">
        <title>The 1.2-megabase genome sequence of Mimivirus.</title>
        <authorList>
            <person name="Raoult D."/>
            <person name="Audic S."/>
            <person name="Robert C."/>
            <person name="Abergel C."/>
            <person name="Renesto P."/>
            <person name="Ogata H."/>
            <person name="La Scola B."/>
            <person name="Susan M."/>
            <person name="Claverie J.-M."/>
        </authorList>
    </citation>
    <scope>NUCLEOTIDE SEQUENCE [LARGE SCALE GENOMIC DNA]</scope>
    <source>
        <strain>Rowbotham-Bradford</strain>
    </source>
</reference>
<dbReference type="EMBL" id="AY653733">
    <property type="protein sequence ID" value="AAV50927.1"/>
    <property type="molecule type" value="Genomic_DNA"/>
</dbReference>
<dbReference type="KEGG" id="vg:9925312"/>
<dbReference type="Proteomes" id="UP000001134">
    <property type="component" value="Genome"/>
</dbReference>
<dbReference type="Gene3D" id="3.40.50.300">
    <property type="entry name" value="P-loop containing nucleotide triphosphate hydrolases"/>
    <property type="match status" value="1"/>
</dbReference>
<dbReference type="InterPro" id="IPR027417">
    <property type="entry name" value="P-loop_NTPase"/>
</dbReference>
<dbReference type="SUPFAM" id="SSF52540">
    <property type="entry name" value="P-loop containing nucleoside triphosphate hydrolases"/>
    <property type="match status" value="1"/>
</dbReference>
<organismHost>
    <name type="scientific">Acanthamoeba polyphaga</name>
    <name type="common">Amoeba</name>
    <dbReference type="NCBI Taxonomy" id="5757"/>
</organismHost>
<feature type="chain" id="PRO_0000071307" description="Uncharacterized protein L666">
    <location>
        <begin position="1"/>
        <end position="251"/>
    </location>
</feature>
<name>YL666_MIMIV</name>
<protein>
    <recommendedName>
        <fullName>Uncharacterized protein L666</fullName>
    </recommendedName>
</protein>
<keyword id="KW-1185">Reference proteome</keyword>